<keyword id="KW-0007">Acetylation</keyword>
<keyword id="KW-0903">Direct protein sequencing</keyword>
<keyword id="KW-1017">Isopeptide bond</keyword>
<keyword id="KW-0597">Phosphoprotein</keyword>
<keyword id="KW-0646">Protease inhibitor</keyword>
<keyword id="KW-1185">Reference proteome</keyword>
<keyword id="KW-0677">Repeat</keyword>
<keyword id="KW-0789">Thiol protease inhibitor</keyword>
<keyword id="KW-0832">Ubl conjugation</keyword>
<protein>
    <recommendedName>
        <fullName>Calpastatin</fullName>
    </recommendedName>
    <alternativeName>
        <fullName>Calpain inhibitor</fullName>
    </alternativeName>
</protein>
<dbReference type="EMBL" id="L14450">
    <property type="protein sequence ID" value="AAA19643.1"/>
    <property type="molecule type" value="mRNA"/>
</dbReference>
<dbReference type="SMR" id="P20811"/>
<dbReference type="FunCoup" id="P20811">
    <property type="interactions" value="653"/>
</dbReference>
<dbReference type="STRING" id="9913.ENSBTAP00000061529"/>
<dbReference type="MEROPS" id="I27.001"/>
<dbReference type="MEROPS" id="I27.002"/>
<dbReference type="MEROPS" id="I27.003"/>
<dbReference type="MEROPS" id="I27.004"/>
<dbReference type="PeptideAtlas" id="P20811"/>
<dbReference type="eggNOG" id="ENOG502RHIZ">
    <property type="taxonomic scope" value="Eukaryota"/>
</dbReference>
<dbReference type="InParanoid" id="P20811"/>
<dbReference type="OrthoDB" id="8926414at2759"/>
<dbReference type="Proteomes" id="UP000009136">
    <property type="component" value="Unplaced"/>
</dbReference>
<dbReference type="GO" id="GO:0005737">
    <property type="term" value="C:cytoplasm"/>
    <property type="evidence" value="ECO:0000318"/>
    <property type="project" value="GO_Central"/>
</dbReference>
<dbReference type="GO" id="GO:0010859">
    <property type="term" value="F:calcium-dependent cysteine-type endopeptidase inhibitor activity"/>
    <property type="evidence" value="ECO:0000318"/>
    <property type="project" value="GO_Central"/>
</dbReference>
<dbReference type="InterPro" id="IPR026998">
    <property type="entry name" value="Calpastatin"/>
</dbReference>
<dbReference type="InterPro" id="IPR001259">
    <property type="entry name" value="Prot_inh_calpain"/>
</dbReference>
<dbReference type="PANTHER" id="PTHR10077">
    <property type="entry name" value="CALPASTATIN"/>
    <property type="match status" value="1"/>
</dbReference>
<dbReference type="PANTHER" id="PTHR10077:SF0">
    <property type="entry name" value="CALPASTATIN"/>
    <property type="match status" value="1"/>
</dbReference>
<dbReference type="Pfam" id="PF00748">
    <property type="entry name" value="Calpain_inhib"/>
    <property type="match status" value="3"/>
</dbReference>
<sequence length="705" mass="75843">MNPTEAKAVKTEPEKKPQSSKPSVVHEKKTQEVKPKEHTEPKSLPKHSSDTGVKHAPKEKAVSKSSEQPPSEKSTKPKTKSQDKISGGGKSTVPAAAAAASAEPADKNKENKLLTSAVPAESKPSKPSGKSDMDTALDDLIDTLGEPEEMKEDNTTYTGPEVSDPMSSTYIEELGKRESTPPPKYKELLNKEEGIAGPPPDSLKPLGPNDAIDALSSDFTCSSLQLTTCSPTADGKETEKEKSTEEALKAQSAGVIRSAAPPKEKRRKVEEDTMTEQALQALSASLGTRKPEPELDPSSIREVDEAKAKEEKVKKCGEDEETVPSEYRLKPATDKDGKPLLPEAEEKPKPLSESELIDELSEDFDQSKPTEKQSKPTEKTEASPAAAPYPVAEDVPRTSMCSLQSAPPTAAPAKGMVPDDAVEALAGSLPKKEADPEDGKPVEDKVKEKAKEEDRENFGEKEETIPPDYRLEEAKDKDGKPLLPKEVKEPLPPLSEDVLLDALSKDFTVPSDTSSPQFEDAKLSAVVSEVVSQTPAPTTQAAGPPPDCARDNKELDDALDQLSDTLGQRQPDPDENKPVEDKVKEKAKAEHRDKLGERDDTIPPKYQHLLDDNKEGTPGKPKDQRAQGIRNCGEKPAGAQDPIDALSGDFDSCPSTTETSTDTPKDKDKKPASVPKHLGNGGKAKDSTKAKEETSKPKADGKSTS</sequence>
<proteinExistence type="evidence at protein level"/>
<comment type="function">
    <text>Specific inhibition of calpain (calcium-dependent cysteine protease). Plays a key role in postmortem tenderization of meat and have been proposed to be involved in muscle protein degradation in living tissue.</text>
</comment>
<comment type="domain">
    <text evidence="1">Each of the four flexible inhibitory domains can inhibit one calcium-bound calpain molecule by occupying both sides of the active site.</text>
</comment>
<comment type="similarity">
    <text evidence="6">Belongs to the protease inhibitor I27 (calpastatin) family.</text>
</comment>
<evidence type="ECO:0000250" key="1"/>
<evidence type="ECO:0000250" key="2">
    <source>
        <dbReference type="UniProtKB" id="P20810"/>
    </source>
</evidence>
<evidence type="ECO:0000250" key="3">
    <source>
        <dbReference type="UniProtKB" id="P27321"/>
    </source>
</evidence>
<evidence type="ECO:0000250" key="4">
    <source>
        <dbReference type="UniProtKB" id="P51125"/>
    </source>
</evidence>
<evidence type="ECO:0000256" key="5">
    <source>
        <dbReference type="SAM" id="MobiDB-lite"/>
    </source>
</evidence>
<evidence type="ECO:0000305" key="6"/>
<name>ICAL_BOVIN</name>
<accession>P20811</accession>
<reference key="1">
    <citation type="journal article" date="1994" name="J. Anim. Sci.">
        <title>Bovine skeletal muscle calpastatin: cloning, sequence analysis, and steady-state mRNA expression.</title>
        <authorList>
            <person name="Killefer J."/>
            <person name="Koohmaraie M."/>
        </authorList>
    </citation>
    <scope>NUCLEOTIDE SEQUENCE [MRNA]</scope>
    <source>
        <tissue>Longissimus muscle</tissue>
    </source>
</reference>
<reference key="2">
    <citation type="journal article" date="1989" name="Biochim. Biophys. Acta">
        <title>The binding of large calpastatin to biologic membranes is mediated in part by interaction of an amino terminal region with acidic phospholipids.</title>
        <authorList>
            <person name="Mellgren R.L."/>
            <person name="Lane R.D."/>
            <person name="Mericle M.T."/>
        </authorList>
    </citation>
    <scope>PROTEIN SEQUENCE OF 2-15 AND 33-45</scope>
    <source>
        <tissue>Heart</tissue>
    </source>
</reference>
<feature type="chain" id="PRO_0000147630" description="Calpastatin">
    <location>
        <begin position="1"/>
        <end position="705"/>
    </location>
</feature>
<feature type="repeat" description="Inhibitory domain 1">
    <location>
        <begin position="149"/>
        <end position="202"/>
    </location>
</feature>
<feature type="repeat" description="Inhibitory domain 2">
    <location>
        <begin position="292"/>
        <end position="344"/>
    </location>
</feature>
<feature type="repeat" description="Inhibitory domain 3">
    <location>
        <begin position="434"/>
        <end position="487"/>
    </location>
</feature>
<feature type="repeat" description="Inhibitory domain 4">
    <location>
        <begin position="571"/>
        <end position="624"/>
    </location>
</feature>
<feature type="region of interest" description="Disordered" evidence="5">
    <location>
        <begin position="1"/>
        <end position="211"/>
    </location>
</feature>
<feature type="region of interest" description="Disordered" evidence="5">
    <location>
        <begin position="226"/>
        <end position="493"/>
    </location>
</feature>
<feature type="region of interest" description="Disordered" evidence="5">
    <location>
        <begin position="527"/>
        <end position="705"/>
    </location>
</feature>
<feature type="compositionally biased region" description="Basic and acidic residues" evidence="5">
    <location>
        <begin position="7"/>
        <end position="17"/>
    </location>
</feature>
<feature type="compositionally biased region" description="Basic and acidic residues" evidence="5">
    <location>
        <begin position="24"/>
        <end position="62"/>
    </location>
</feature>
<feature type="compositionally biased region" description="Low complexity" evidence="5">
    <location>
        <begin position="63"/>
        <end position="72"/>
    </location>
</feature>
<feature type="compositionally biased region" description="Low complexity" evidence="5">
    <location>
        <begin position="94"/>
        <end position="103"/>
    </location>
</feature>
<feature type="compositionally biased region" description="Acidic residues" evidence="5">
    <location>
        <begin position="135"/>
        <end position="151"/>
    </location>
</feature>
<feature type="compositionally biased region" description="Basic and acidic residues" evidence="5">
    <location>
        <begin position="173"/>
        <end position="194"/>
    </location>
</feature>
<feature type="compositionally biased region" description="Basic and acidic residues" evidence="5">
    <location>
        <begin position="234"/>
        <end position="248"/>
    </location>
</feature>
<feature type="compositionally biased region" description="Polar residues" evidence="5">
    <location>
        <begin position="275"/>
        <end position="286"/>
    </location>
</feature>
<feature type="compositionally biased region" description="Basic and acidic residues" evidence="5">
    <location>
        <begin position="289"/>
        <end position="317"/>
    </location>
</feature>
<feature type="compositionally biased region" description="Basic and acidic residues" evidence="5">
    <location>
        <begin position="327"/>
        <end position="352"/>
    </location>
</feature>
<feature type="compositionally biased region" description="Acidic residues" evidence="5">
    <location>
        <begin position="355"/>
        <end position="364"/>
    </location>
</feature>
<feature type="compositionally biased region" description="Basic and acidic residues" evidence="5">
    <location>
        <begin position="365"/>
        <end position="381"/>
    </location>
</feature>
<feature type="compositionally biased region" description="Basic and acidic residues" evidence="5">
    <location>
        <begin position="430"/>
        <end position="489"/>
    </location>
</feature>
<feature type="compositionally biased region" description="Low complexity" evidence="5">
    <location>
        <begin position="533"/>
        <end position="542"/>
    </location>
</feature>
<feature type="compositionally biased region" description="Basic and acidic residues" evidence="5">
    <location>
        <begin position="571"/>
        <end position="625"/>
    </location>
</feature>
<feature type="compositionally biased region" description="Low complexity" evidence="5">
    <location>
        <begin position="651"/>
        <end position="662"/>
    </location>
</feature>
<feature type="compositionally biased region" description="Basic and acidic residues" evidence="5">
    <location>
        <begin position="683"/>
        <end position="705"/>
    </location>
</feature>
<feature type="modified residue" description="N6-acetyllysine" evidence="4">
    <location>
        <position position="28"/>
    </location>
</feature>
<feature type="modified residue" description="Phosphoserine" evidence="4">
    <location>
        <position position="65"/>
    </location>
</feature>
<feature type="modified residue" description="Phosphothreonine" evidence="3">
    <location>
        <position position="115"/>
    </location>
</feature>
<feature type="modified residue" description="Phosphoserine" evidence="4">
    <location>
        <position position="202"/>
    </location>
</feature>
<feature type="modified residue" description="Phosphoserine" evidence="2">
    <location>
        <position position="230"/>
    </location>
</feature>
<feature type="modified residue" description="Phosphoserine" evidence="2">
    <location>
        <position position="352"/>
    </location>
</feature>
<feature type="modified residue" description="Phosphoserine" evidence="2">
    <location>
        <position position="354"/>
    </location>
</feature>
<feature type="modified residue" description="Phosphoserine" evidence="2">
    <location>
        <position position="361"/>
    </location>
</feature>
<feature type="modified residue" description="Phosphoserine" evidence="2">
    <location>
        <position position="428"/>
    </location>
</feature>
<feature type="modified residue" description="Phosphoserine" evidence="2">
    <location>
        <position position="504"/>
    </location>
</feature>
<feature type="modified residue" description="Phosphoserine" evidence="2">
    <location>
        <position position="515"/>
    </location>
</feature>
<feature type="modified residue" description="Phosphoserine" evidence="2">
    <location>
        <position position="563"/>
    </location>
</feature>
<feature type="cross-link" description="Glycyl lysine isopeptide (Lys-Gly) (interchain with G-Cter in SUMO2)" evidence="2">
    <location>
        <position position="10"/>
    </location>
</feature>
<feature type="sequence conflict" description="In Ref. 2; AA sequence." evidence="6" ref="2">
    <original>N</original>
    <variation>G</variation>
    <location>
        <position position="2"/>
    </location>
</feature>
<feature type="sequence conflict" description="In Ref. 2; AA sequence." evidence="6" ref="2">
    <original>VKTEPEK</original>
    <variation>IPGSKQL</variation>
    <location>
        <begin position="9"/>
        <end position="15"/>
    </location>
</feature>
<feature type="sequence conflict" description="In Ref. 2; AA sequence." evidence="6" ref="2">
    <original>T</original>
    <variation>S</variation>
    <location>
        <position position="39"/>
    </location>
</feature>
<organism>
    <name type="scientific">Bos taurus</name>
    <name type="common">Bovine</name>
    <dbReference type="NCBI Taxonomy" id="9913"/>
    <lineage>
        <taxon>Eukaryota</taxon>
        <taxon>Metazoa</taxon>
        <taxon>Chordata</taxon>
        <taxon>Craniata</taxon>
        <taxon>Vertebrata</taxon>
        <taxon>Euteleostomi</taxon>
        <taxon>Mammalia</taxon>
        <taxon>Eutheria</taxon>
        <taxon>Laurasiatheria</taxon>
        <taxon>Artiodactyla</taxon>
        <taxon>Ruminantia</taxon>
        <taxon>Pecora</taxon>
        <taxon>Bovidae</taxon>
        <taxon>Bovinae</taxon>
        <taxon>Bos</taxon>
    </lineage>
</organism>
<gene>
    <name type="primary">CAST</name>
</gene>